<organism>
    <name type="scientific">Nostoc sp. (strain PCC 7120 / SAG 25.82 / UTEX 2576)</name>
    <dbReference type="NCBI Taxonomy" id="103690"/>
    <lineage>
        <taxon>Bacteria</taxon>
        <taxon>Bacillati</taxon>
        <taxon>Cyanobacteriota</taxon>
        <taxon>Cyanophyceae</taxon>
        <taxon>Nostocales</taxon>
        <taxon>Nostocaceae</taxon>
        <taxon>Nostoc</taxon>
    </lineage>
</organism>
<protein>
    <recommendedName>
        <fullName evidence="1">Small ribosomal subunit protein bS6</fullName>
    </recommendedName>
    <alternativeName>
        <fullName evidence="2">30S ribosomal protein S6</fullName>
    </alternativeName>
</protein>
<feature type="chain" id="PRO_0000176715" description="Small ribosomal subunit protein bS6">
    <location>
        <begin position="1"/>
        <end position="108"/>
    </location>
</feature>
<reference key="1">
    <citation type="journal article" date="2001" name="DNA Res.">
        <title>Complete genomic sequence of the filamentous nitrogen-fixing cyanobacterium Anabaena sp. strain PCC 7120.</title>
        <authorList>
            <person name="Kaneko T."/>
            <person name="Nakamura Y."/>
            <person name="Wolk C.P."/>
            <person name="Kuritz T."/>
            <person name="Sasamoto S."/>
            <person name="Watanabe A."/>
            <person name="Iriguchi M."/>
            <person name="Ishikawa A."/>
            <person name="Kawashima K."/>
            <person name="Kimura T."/>
            <person name="Kishida Y."/>
            <person name="Kohara M."/>
            <person name="Matsumoto M."/>
            <person name="Matsuno A."/>
            <person name="Muraki A."/>
            <person name="Nakazaki N."/>
            <person name="Shimpo S."/>
            <person name="Sugimoto M."/>
            <person name="Takazawa M."/>
            <person name="Yamada M."/>
            <person name="Yasuda M."/>
            <person name="Tabata S."/>
        </authorList>
    </citation>
    <scope>NUCLEOTIDE SEQUENCE [LARGE SCALE GENOMIC DNA]</scope>
    <source>
        <strain>PCC 7120 / SAG 25.82 / UTEX 2576</strain>
    </source>
</reference>
<name>RS6_NOSS1</name>
<keyword id="KW-1185">Reference proteome</keyword>
<keyword id="KW-0687">Ribonucleoprotein</keyword>
<keyword id="KW-0689">Ribosomal protein</keyword>
<keyword id="KW-0694">RNA-binding</keyword>
<keyword id="KW-0699">rRNA-binding</keyword>
<gene>
    <name evidence="1" type="primary">rpsF</name>
    <name evidence="1" type="synonym">rps6</name>
    <name type="ordered locus">all4802</name>
</gene>
<accession>Q8YMX2</accession>
<dbReference type="EMBL" id="BA000019">
    <property type="protein sequence ID" value="BAB76501.1"/>
    <property type="molecule type" value="Genomic_DNA"/>
</dbReference>
<dbReference type="PIR" id="AB2406">
    <property type="entry name" value="AB2406"/>
</dbReference>
<dbReference type="RefSeq" id="WP_010998932.1">
    <property type="nucleotide sequence ID" value="NZ_RSCN01000035.1"/>
</dbReference>
<dbReference type="SMR" id="Q8YMX2"/>
<dbReference type="STRING" id="103690.gene:10496855"/>
<dbReference type="KEGG" id="ana:all4802"/>
<dbReference type="eggNOG" id="COG0360">
    <property type="taxonomic scope" value="Bacteria"/>
</dbReference>
<dbReference type="OrthoDB" id="9812702at2"/>
<dbReference type="Proteomes" id="UP000002483">
    <property type="component" value="Chromosome"/>
</dbReference>
<dbReference type="GO" id="GO:0005737">
    <property type="term" value="C:cytoplasm"/>
    <property type="evidence" value="ECO:0007669"/>
    <property type="project" value="UniProtKB-ARBA"/>
</dbReference>
<dbReference type="GO" id="GO:1990904">
    <property type="term" value="C:ribonucleoprotein complex"/>
    <property type="evidence" value="ECO:0007669"/>
    <property type="project" value="UniProtKB-KW"/>
</dbReference>
<dbReference type="GO" id="GO:0005840">
    <property type="term" value="C:ribosome"/>
    <property type="evidence" value="ECO:0007669"/>
    <property type="project" value="UniProtKB-KW"/>
</dbReference>
<dbReference type="GO" id="GO:0070181">
    <property type="term" value="F:small ribosomal subunit rRNA binding"/>
    <property type="evidence" value="ECO:0007669"/>
    <property type="project" value="TreeGrafter"/>
</dbReference>
<dbReference type="GO" id="GO:0003735">
    <property type="term" value="F:structural constituent of ribosome"/>
    <property type="evidence" value="ECO:0007669"/>
    <property type="project" value="InterPro"/>
</dbReference>
<dbReference type="GO" id="GO:0006412">
    <property type="term" value="P:translation"/>
    <property type="evidence" value="ECO:0007669"/>
    <property type="project" value="UniProtKB-UniRule"/>
</dbReference>
<dbReference type="CDD" id="cd15487">
    <property type="entry name" value="bS6_chloro_cyano"/>
    <property type="match status" value="1"/>
</dbReference>
<dbReference type="Gene3D" id="3.30.70.60">
    <property type="match status" value="1"/>
</dbReference>
<dbReference type="HAMAP" id="MF_00360">
    <property type="entry name" value="Ribosomal_bS6"/>
    <property type="match status" value="1"/>
</dbReference>
<dbReference type="InterPro" id="IPR000529">
    <property type="entry name" value="Ribosomal_bS6"/>
</dbReference>
<dbReference type="InterPro" id="IPR020815">
    <property type="entry name" value="Ribosomal_bS6_CS"/>
</dbReference>
<dbReference type="InterPro" id="IPR035980">
    <property type="entry name" value="Ribosomal_bS6_sf"/>
</dbReference>
<dbReference type="InterPro" id="IPR020814">
    <property type="entry name" value="Ribosomal_S6_plastid/chlpt"/>
</dbReference>
<dbReference type="InterPro" id="IPR014717">
    <property type="entry name" value="Transl_elong_EF1B/ribsomal_bS6"/>
</dbReference>
<dbReference type="NCBIfam" id="TIGR00166">
    <property type="entry name" value="S6"/>
    <property type="match status" value="1"/>
</dbReference>
<dbReference type="PANTHER" id="PTHR21011">
    <property type="entry name" value="MITOCHONDRIAL 28S RIBOSOMAL PROTEIN S6"/>
    <property type="match status" value="1"/>
</dbReference>
<dbReference type="PANTHER" id="PTHR21011:SF1">
    <property type="entry name" value="SMALL RIBOSOMAL SUBUNIT PROTEIN BS6M"/>
    <property type="match status" value="1"/>
</dbReference>
<dbReference type="Pfam" id="PF01250">
    <property type="entry name" value="Ribosomal_S6"/>
    <property type="match status" value="1"/>
</dbReference>
<dbReference type="SUPFAM" id="SSF54995">
    <property type="entry name" value="Ribosomal protein S6"/>
    <property type="match status" value="1"/>
</dbReference>
<dbReference type="PROSITE" id="PS01048">
    <property type="entry name" value="RIBOSOMAL_S6"/>
    <property type="match status" value="1"/>
</dbReference>
<evidence type="ECO:0000255" key="1">
    <source>
        <dbReference type="HAMAP-Rule" id="MF_00360"/>
    </source>
</evidence>
<evidence type="ECO:0000305" key="2"/>
<proteinExistence type="inferred from homology"/>
<sequence length="108" mass="12557">MSTVYETLYILRPDLTDEQVELAIAKYQNLLQEQGATDLEVQNRGKRRLAYEIKKQRDGFYVQFNYNAPGKAIAILERAMRLSEEVIRYLTVKQEVTKEKEDKVAVTA</sequence>
<comment type="function">
    <text evidence="1">Binds together with bS18 to 16S ribosomal RNA.</text>
</comment>
<comment type="similarity">
    <text evidence="1">Belongs to the bacterial ribosomal protein bS6 family.</text>
</comment>